<evidence type="ECO:0000255" key="1">
    <source>
        <dbReference type="PROSITE-ProRule" id="PRU00267"/>
    </source>
</evidence>
<dbReference type="EMBL" id="M86312">
    <property type="protein sequence ID" value="AAA48525.1"/>
    <property type="molecule type" value="Genomic_DNA"/>
</dbReference>
<dbReference type="PIR" id="I50021">
    <property type="entry name" value="I50021"/>
</dbReference>
<dbReference type="SMR" id="P40636"/>
<dbReference type="GO" id="GO:0005634">
    <property type="term" value="C:nucleus"/>
    <property type="evidence" value="ECO:0007669"/>
    <property type="project" value="UniProtKB-SubCell"/>
</dbReference>
<dbReference type="GO" id="GO:0001228">
    <property type="term" value="F:DNA-binding transcription activator activity, RNA polymerase II-specific"/>
    <property type="evidence" value="ECO:0007669"/>
    <property type="project" value="TreeGrafter"/>
</dbReference>
<dbReference type="GO" id="GO:0000978">
    <property type="term" value="F:RNA polymerase II cis-regulatory region sequence-specific DNA binding"/>
    <property type="evidence" value="ECO:0007669"/>
    <property type="project" value="TreeGrafter"/>
</dbReference>
<dbReference type="GO" id="GO:0007420">
    <property type="term" value="P:brain development"/>
    <property type="evidence" value="ECO:0007669"/>
    <property type="project" value="TreeGrafter"/>
</dbReference>
<dbReference type="GO" id="GO:0048593">
    <property type="term" value="P:camera-type eye morphogenesis"/>
    <property type="evidence" value="ECO:0007669"/>
    <property type="project" value="TreeGrafter"/>
</dbReference>
<dbReference type="GO" id="GO:0000122">
    <property type="term" value="P:negative regulation of transcription by RNA polymerase II"/>
    <property type="evidence" value="ECO:0007669"/>
    <property type="project" value="TreeGrafter"/>
</dbReference>
<dbReference type="GO" id="GO:0030182">
    <property type="term" value="P:neuron differentiation"/>
    <property type="evidence" value="ECO:0007669"/>
    <property type="project" value="TreeGrafter"/>
</dbReference>
<dbReference type="FunFam" id="1.10.30.10:FF:000007">
    <property type="entry name" value="Transcription factor SOX"/>
    <property type="match status" value="1"/>
</dbReference>
<dbReference type="Gene3D" id="1.10.30.10">
    <property type="entry name" value="High mobility group box domain"/>
    <property type="match status" value="1"/>
</dbReference>
<dbReference type="InterPro" id="IPR009071">
    <property type="entry name" value="HMG_box_dom"/>
</dbReference>
<dbReference type="InterPro" id="IPR036910">
    <property type="entry name" value="HMG_box_dom_sf"/>
</dbReference>
<dbReference type="InterPro" id="IPR050140">
    <property type="entry name" value="SRY-related_HMG-box_TF-like"/>
</dbReference>
<dbReference type="PANTHER" id="PTHR10270">
    <property type="entry name" value="SOX TRANSCRIPTION FACTOR"/>
    <property type="match status" value="1"/>
</dbReference>
<dbReference type="PANTHER" id="PTHR10270:SF221">
    <property type="entry name" value="TRANSCRIPTION FACTOR SOX-12"/>
    <property type="match status" value="1"/>
</dbReference>
<dbReference type="Pfam" id="PF00505">
    <property type="entry name" value="HMG_box"/>
    <property type="match status" value="1"/>
</dbReference>
<dbReference type="SMART" id="SM00398">
    <property type="entry name" value="HMG"/>
    <property type="match status" value="1"/>
</dbReference>
<dbReference type="SUPFAM" id="SSF47095">
    <property type="entry name" value="HMG-box"/>
    <property type="match status" value="1"/>
</dbReference>
<dbReference type="PROSITE" id="PS50118">
    <property type="entry name" value="HMG_BOX_2"/>
    <property type="match status" value="1"/>
</dbReference>
<accession>P40636</accession>
<keyword id="KW-0238">DNA-binding</keyword>
<keyword id="KW-0539">Nucleus</keyword>
<reference key="1">
    <citation type="journal article" date="1993" name="PCR Methods Appl.">
        <title>PCR amplification of SRY-related gene sequences reveals evolutionary conservation of the SRY-box motif.</title>
        <authorList>
            <person name="Coriat A.M."/>
            <person name="Mueller U."/>
            <person name="Harry J.L."/>
            <person name="Uwanogho D."/>
            <person name="Sharpe P.T."/>
        </authorList>
    </citation>
    <scope>NUCLEOTIDE SEQUENCE [GENOMIC DNA]</scope>
</reference>
<protein>
    <recommendedName>
        <fullName>SRY-related protein ADW5</fullName>
    </recommendedName>
</protein>
<proteinExistence type="inferred from homology"/>
<comment type="subcellular location">
    <subcellularLocation>
        <location evidence="1">Nucleus</location>
    </subcellularLocation>
</comment>
<sequence>VKRPMNAFMVWSQHERRKIMDQWPDMHNAEISKRLGRRWQLLQDSEKIPFVKEAGGLRLKHMADYPDYKYRP</sequence>
<feature type="chain" id="PRO_0000048789" description="SRY-related protein ADW5">
    <location>
        <begin position="1" status="less than"/>
        <end position="72" status="greater than"/>
    </location>
</feature>
<feature type="DNA-binding region" description="HMG box" evidence="1">
    <location>
        <begin position="1"/>
        <end position="69"/>
    </location>
</feature>
<feature type="non-terminal residue">
    <location>
        <position position="1"/>
    </location>
</feature>
<feature type="non-terminal residue">
    <location>
        <position position="72"/>
    </location>
</feature>
<organism>
    <name type="scientific">Alligator mississippiensis</name>
    <name type="common">American alligator</name>
    <dbReference type="NCBI Taxonomy" id="8496"/>
    <lineage>
        <taxon>Eukaryota</taxon>
        <taxon>Metazoa</taxon>
        <taxon>Chordata</taxon>
        <taxon>Craniata</taxon>
        <taxon>Vertebrata</taxon>
        <taxon>Euteleostomi</taxon>
        <taxon>Archelosauria</taxon>
        <taxon>Archosauria</taxon>
        <taxon>Crocodylia</taxon>
        <taxon>Alligatoridae</taxon>
        <taxon>Alligatorinae</taxon>
        <taxon>Alligator</taxon>
    </lineage>
</organism>
<name>ADW5_ALLMI</name>